<evidence type="ECO:0000250" key="1">
    <source>
        <dbReference type="UniProtKB" id="Q04307"/>
    </source>
</evidence>
<evidence type="ECO:0000250" key="2">
    <source>
        <dbReference type="UniProtKB" id="Q9Y2Y1"/>
    </source>
</evidence>
<evidence type="ECO:0000255" key="3"/>
<evidence type="ECO:0000255" key="4">
    <source>
        <dbReference type="PROSITE-ProRule" id="PRU00472"/>
    </source>
</evidence>
<evidence type="ECO:0000255" key="5">
    <source>
        <dbReference type="PROSITE-ProRule" id="PRU10145"/>
    </source>
</evidence>
<evidence type="ECO:0000305" key="6"/>
<evidence type="ECO:0000312" key="7">
    <source>
        <dbReference type="MGI" id="MGI:1914255"/>
    </source>
</evidence>
<accession>Q9CQZ7</accession>
<accession>Q9D1U1</accession>
<gene>
    <name evidence="7" type="primary">Polr3k</name>
</gene>
<protein>
    <recommendedName>
        <fullName>DNA-directed RNA polymerase III subunit RPC10</fullName>
        <shortName>RNA polymerase III subunit C10</shortName>
    </recommendedName>
    <alternativeName>
        <fullName>DNA-directed RNA polymerase III subunit K</fullName>
    </alternativeName>
    <alternativeName>
        <fullName>RNA polymerase III subunit C11</fullName>
        <shortName>RPC11</shortName>
    </alternativeName>
</protein>
<organism>
    <name type="scientific">Mus musculus</name>
    <name type="common">Mouse</name>
    <dbReference type="NCBI Taxonomy" id="10090"/>
    <lineage>
        <taxon>Eukaryota</taxon>
        <taxon>Metazoa</taxon>
        <taxon>Chordata</taxon>
        <taxon>Craniata</taxon>
        <taxon>Vertebrata</taxon>
        <taxon>Euteleostomi</taxon>
        <taxon>Mammalia</taxon>
        <taxon>Eutheria</taxon>
        <taxon>Euarchontoglires</taxon>
        <taxon>Glires</taxon>
        <taxon>Rodentia</taxon>
        <taxon>Myomorpha</taxon>
        <taxon>Muroidea</taxon>
        <taxon>Muridae</taxon>
        <taxon>Murinae</taxon>
        <taxon>Mus</taxon>
        <taxon>Mus</taxon>
    </lineage>
</organism>
<comment type="function">
    <text evidence="1 2">Core component of RNA polymerase III (Pol III) which synthesizes small non-coding RNAs using the four ribonucleoside triphosphates as substrates (By similarity). Can mediate Pol I proofreading of the nascent RNA transcript. Anchors into the Pol III active site to constantly monitor transcription fidelity, cleaves mis-incorporated 5'-ribonucleotides and restarts the transcription process. Once Pol III reaches the poly(dT) termination signal, can induce Pol III clamp opening and transcription termination (By similarity). Pol III plays an important role in sensing and limiting infection by intracellular bacteria and DNA viruses. Acts as a nuclear and cytosolic DNA sensor involved in innate immune response. Can sense non-self dsDNA that serves as template for transcription into dsRNA. The non-self RNA polymerase III transcripts, such as Epstein-Barr virus-encoded RNAs (EBERs) induce type I interferon and NF-kappa-B through the RIG-I pathway (By similarity).</text>
</comment>
<comment type="subunit">
    <text evidence="2">Component of the RNA polymerase III complex consisting of 17 subunits: a ten-subunit horseshoe-shaped catalytic core composed of POLR3A/RPC1, POLR3B/RPC2, POLR1C/RPAC1, POLR1D/RPAC2, POLR3K/RPC10, POLR2E/RPABC1, POLR2F/RPABC2, POLR2H/RPABC3, POLR2K/RPABC4 and POLR2L/RPABC5; a mobile stalk composed of two subunits POLR3H/RPC8 and CRCP/RPC9, protruding from the core and functioning primarily in transcription initiation; and additional subunits homologous to general transcription factors of the RNA polymerase II machinery, POLR3C/RPC3-POLR3F/RPC6-POLR3G/RPC7 heterotrimer required for transcription initiation and POLR3D/RPC4-POLR3E/RPC5 heterodimer involved in both transcription initiation and termination.</text>
</comment>
<comment type="subcellular location">
    <subcellularLocation>
        <location evidence="2">Nucleus</location>
    </subcellularLocation>
</comment>
<comment type="domain">
    <text evidence="2">The TFIIS-type zinc-binding beta-ribbon domain contains an acidic hairpin motif (residues Asp-88, Glu-89) that likely coordinates the nucleophilic water and magnesium to cleave the scissile phosphodiester bond and release the mis-incorporated 5'-ribonucleotides.</text>
</comment>
<comment type="similarity">
    <text evidence="6">Belongs to the archaeal RpoM/eukaryotic RPA12/RPB9/RPC11 RNA polymerase family.</text>
</comment>
<keyword id="KW-0051">Antiviral defense</keyword>
<keyword id="KW-0240">DNA-directed RNA polymerase</keyword>
<keyword id="KW-0391">Immunity</keyword>
<keyword id="KW-0399">Innate immunity</keyword>
<keyword id="KW-0479">Metal-binding</keyword>
<keyword id="KW-0539">Nucleus</keyword>
<keyword id="KW-1185">Reference proteome</keyword>
<keyword id="KW-0804">Transcription</keyword>
<keyword id="KW-0862">Zinc</keyword>
<keyword id="KW-0863">Zinc-finger</keyword>
<name>RPC10_MOUSE</name>
<dbReference type="EMBL" id="AK005152">
    <property type="protein sequence ID" value="BAB23846.1"/>
    <property type="molecule type" value="mRNA"/>
</dbReference>
<dbReference type="EMBL" id="AK010875">
    <property type="protein sequence ID" value="BAB27239.1"/>
    <property type="molecule type" value="mRNA"/>
</dbReference>
<dbReference type="EMBL" id="AK021353">
    <property type="protein sequence ID" value="BAB32384.1"/>
    <property type="molecule type" value="mRNA"/>
</dbReference>
<dbReference type="EMBL" id="AK031110">
    <property type="protein sequence ID" value="BAC27257.1"/>
    <property type="molecule type" value="mRNA"/>
</dbReference>
<dbReference type="CCDS" id="CCDS17225.1"/>
<dbReference type="RefSeq" id="NP_080177.1">
    <property type="nucleotide sequence ID" value="NM_025901.3"/>
</dbReference>
<dbReference type="SMR" id="Q9CQZ7"/>
<dbReference type="BioGRID" id="211869">
    <property type="interactions" value="12"/>
</dbReference>
<dbReference type="FunCoup" id="Q9CQZ7">
    <property type="interactions" value="682"/>
</dbReference>
<dbReference type="STRING" id="10090.ENSMUSP00000044582"/>
<dbReference type="PhosphoSitePlus" id="Q9CQZ7"/>
<dbReference type="PaxDb" id="10090-ENSMUSP00000044582"/>
<dbReference type="ProteomicsDB" id="260923"/>
<dbReference type="Antibodypedia" id="1811">
    <property type="antibodies" value="155 antibodies from 24 providers"/>
</dbReference>
<dbReference type="DNASU" id="67005"/>
<dbReference type="Ensembl" id="ENSMUST00000039551.9">
    <property type="protein sequence ID" value="ENSMUSP00000044582.9"/>
    <property type="gene ID" value="ENSMUSG00000038628.9"/>
</dbReference>
<dbReference type="GeneID" id="67005"/>
<dbReference type="KEGG" id="mmu:67005"/>
<dbReference type="UCSC" id="uc008onw.1">
    <property type="organism name" value="mouse"/>
</dbReference>
<dbReference type="AGR" id="MGI:1914255"/>
<dbReference type="CTD" id="51728"/>
<dbReference type="MGI" id="MGI:1914255">
    <property type="gene designation" value="Polr3k"/>
</dbReference>
<dbReference type="VEuPathDB" id="HostDB:ENSMUSG00000038628"/>
<dbReference type="eggNOG" id="KOG2906">
    <property type="taxonomic scope" value="Eukaryota"/>
</dbReference>
<dbReference type="GeneTree" id="ENSGT00550000075071"/>
<dbReference type="HOGENOM" id="CLU_093932_3_0_1"/>
<dbReference type="InParanoid" id="Q9CQZ7"/>
<dbReference type="OMA" id="MEFCDEC"/>
<dbReference type="OrthoDB" id="282152at2759"/>
<dbReference type="PhylomeDB" id="Q9CQZ7"/>
<dbReference type="TreeFam" id="TF103031"/>
<dbReference type="Reactome" id="R-MMU-76061">
    <property type="pathway name" value="RNA Polymerase III Transcription Initiation From Type 1 Promoter"/>
</dbReference>
<dbReference type="Reactome" id="R-MMU-76066">
    <property type="pathway name" value="RNA Polymerase III Transcription Initiation From Type 2 Promoter"/>
</dbReference>
<dbReference type="Reactome" id="R-MMU-76071">
    <property type="pathway name" value="RNA Polymerase III Transcription Initiation From Type 3 Promoter"/>
</dbReference>
<dbReference type="BioGRID-ORCS" id="67005">
    <property type="hits" value="32 hits in 80 CRISPR screens"/>
</dbReference>
<dbReference type="ChiTaRS" id="Polr3k">
    <property type="organism name" value="mouse"/>
</dbReference>
<dbReference type="PRO" id="PR:Q9CQZ7"/>
<dbReference type="Proteomes" id="UP000000589">
    <property type="component" value="Chromosome 2"/>
</dbReference>
<dbReference type="RNAct" id="Q9CQZ7">
    <property type="molecule type" value="protein"/>
</dbReference>
<dbReference type="Bgee" id="ENSMUSG00000038628">
    <property type="expression patterns" value="Expressed in ciliary body and 267 other cell types or tissues"/>
</dbReference>
<dbReference type="GO" id="GO:0000428">
    <property type="term" value="C:DNA-directed RNA polymerase complex"/>
    <property type="evidence" value="ECO:0007669"/>
    <property type="project" value="UniProtKB-KW"/>
</dbReference>
<dbReference type="GO" id="GO:0005634">
    <property type="term" value="C:nucleus"/>
    <property type="evidence" value="ECO:0007669"/>
    <property type="project" value="UniProtKB-SubCell"/>
</dbReference>
<dbReference type="GO" id="GO:0003899">
    <property type="term" value="F:DNA-directed RNA polymerase activity"/>
    <property type="evidence" value="ECO:0007669"/>
    <property type="project" value="InterPro"/>
</dbReference>
<dbReference type="GO" id="GO:0003676">
    <property type="term" value="F:nucleic acid binding"/>
    <property type="evidence" value="ECO:0007669"/>
    <property type="project" value="InterPro"/>
</dbReference>
<dbReference type="GO" id="GO:0008270">
    <property type="term" value="F:zinc ion binding"/>
    <property type="evidence" value="ECO:0007669"/>
    <property type="project" value="UniProtKB-KW"/>
</dbReference>
<dbReference type="GO" id="GO:0051607">
    <property type="term" value="P:defense response to virus"/>
    <property type="evidence" value="ECO:0007669"/>
    <property type="project" value="UniProtKB-KW"/>
</dbReference>
<dbReference type="GO" id="GO:0006351">
    <property type="term" value="P:DNA-templated transcription"/>
    <property type="evidence" value="ECO:0007669"/>
    <property type="project" value="InterPro"/>
</dbReference>
<dbReference type="GO" id="GO:0045087">
    <property type="term" value="P:innate immune response"/>
    <property type="evidence" value="ECO:0007669"/>
    <property type="project" value="UniProtKB-KW"/>
</dbReference>
<dbReference type="CDD" id="cd10509">
    <property type="entry name" value="Zn-ribbon_RPC11"/>
    <property type="match status" value="1"/>
</dbReference>
<dbReference type="FunFam" id="2.20.25.10:FF:000005">
    <property type="entry name" value="DNA-directed RNA polymerase subunit"/>
    <property type="match status" value="1"/>
</dbReference>
<dbReference type="Gene3D" id="2.20.25.10">
    <property type="match status" value="1"/>
</dbReference>
<dbReference type="InterPro" id="IPR019761">
    <property type="entry name" value="DNA-dir_RNA_pol-M_15_CS"/>
</dbReference>
<dbReference type="InterPro" id="IPR012164">
    <property type="entry name" value="Rpa12/Rpb9/Rpc10/TFS"/>
</dbReference>
<dbReference type="InterPro" id="IPR001529">
    <property type="entry name" value="Zn_ribbon_RPB9"/>
</dbReference>
<dbReference type="InterPro" id="IPR034014">
    <property type="entry name" value="Zn_ribbon_RPC11_C"/>
</dbReference>
<dbReference type="InterPro" id="IPR001222">
    <property type="entry name" value="Znf_TFIIS"/>
</dbReference>
<dbReference type="PANTHER" id="PTHR11239">
    <property type="entry name" value="DNA-DIRECTED RNA POLYMERASE"/>
    <property type="match status" value="1"/>
</dbReference>
<dbReference type="PANTHER" id="PTHR11239:SF12">
    <property type="entry name" value="DNA-DIRECTED RNA POLYMERASE III SUBUNIT RPC10"/>
    <property type="match status" value="1"/>
</dbReference>
<dbReference type="Pfam" id="PF02150">
    <property type="entry name" value="Zn_ribbon_RPB9"/>
    <property type="match status" value="1"/>
</dbReference>
<dbReference type="Pfam" id="PF01096">
    <property type="entry name" value="Zn_ribbon_TFIIS"/>
    <property type="match status" value="1"/>
</dbReference>
<dbReference type="PIRSF" id="PIRSF005586">
    <property type="entry name" value="RNApol_RpoM"/>
    <property type="match status" value="1"/>
</dbReference>
<dbReference type="SMART" id="SM00661">
    <property type="entry name" value="RPOL9"/>
    <property type="match status" value="1"/>
</dbReference>
<dbReference type="SMART" id="SM00440">
    <property type="entry name" value="ZnF_C2C2"/>
    <property type="match status" value="1"/>
</dbReference>
<dbReference type="SUPFAM" id="SSF57783">
    <property type="entry name" value="Zinc beta-ribbon"/>
    <property type="match status" value="1"/>
</dbReference>
<dbReference type="PROSITE" id="PS01030">
    <property type="entry name" value="RNA_POL_M_15KD"/>
    <property type="match status" value="1"/>
</dbReference>
<dbReference type="PROSITE" id="PS00466">
    <property type="entry name" value="ZF_TFIIS_1"/>
    <property type="match status" value="1"/>
</dbReference>
<dbReference type="PROSITE" id="PS51133">
    <property type="entry name" value="ZF_TFIIS_2"/>
    <property type="match status" value="1"/>
</dbReference>
<feature type="chain" id="PRO_0000121476" description="DNA-directed RNA polymerase III subunit RPC10">
    <location>
        <begin position="1"/>
        <end position="108"/>
    </location>
</feature>
<feature type="zinc finger region" description="C4-type" evidence="3">
    <location>
        <begin position="5"/>
        <end position="28"/>
    </location>
</feature>
<feature type="zinc finger region" description="TFIIS-type" evidence="4">
    <location>
        <begin position="65"/>
        <end position="107"/>
    </location>
</feature>
<feature type="short sequence motif" description="Hairpin" evidence="2">
    <location>
        <begin position="88"/>
        <end position="89"/>
    </location>
</feature>
<feature type="binding site" evidence="5">
    <location>
        <position position="5"/>
    </location>
    <ligand>
        <name>Zn(2+)</name>
        <dbReference type="ChEBI" id="CHEBI:29105"/>
        <label>1</label>
    </ligand>
</feature>
<feature type="binding site" evidence="5">
    <location>
        <position position="8"/>
    </location>
    <ligand>
        <name>Zn(2+)</name>
        <dbReference type="ChEBI" id="CHEBI:29105"/>
        <label>1</label>
    </ligand>
</feature>
<feature type="binding site" evidence="5">
    <location>
        <position position="25"/>
    </location>
    <ligand>
        <name>Zn(2+)</name>
        <dbReference type="ChEBI" id="CHEBI:29105"/>
        <label>1</label>
    </ligand>
</feature>
<feature type="binding site" evidence="5">
    <location>
        <position position="28"/>
    </location>
    <ligand>
        <name>Zn(2+)</name>
        <dbReference type="ChEBI" id="CHEBI:29105"/>
        <label>1</label>
    </ligand>
</feature>
<feature type="binding site" evidence="4">
    <location>
        <position position="69"/>
    </location>
    <ligand>
        <name>Zn(2+)</name>
        <dbReference type="ChEBI" id="CHEBI:29105"/>
        <label>2</label>
    </ligand>
</feature>
<feature type="binding site" evidence="4">
    <location>
        <position position="72"/>
    </location>
    <ligand>
        <name>Zn(2+)</name>
        <dbReference type="ChEBI" id="CHEBI:29105"/>
        <label>2</label>
    </ligand>
</feature>
<feature type="binding site" evidence="4">
    <location>
        <position position="98"/>
    </location>
    <ligand>
        <name>Zn(2+)</name>
        <dbReference type="ChEBI" id="CHEBI:29105"/>
        <label>2</label>
    </ligand>
</feature>
<feature type="binding site" evidence="4">
    <location>
        <position position="102"/>
    </location>
    <ligand>
        <name>Zn(2+)</name>
        <dbReference type="ChEBI" id="CHEBI:29105"/>
        <label>2</label>
    </ligand>
</feature>
<feature type="sequence conflict" description="In Ref. 1; BAB32384." evidence="6" ref="1">
    <original>E</original>
    <variation>V</variation>
    <location>
        <position position="15"/>
    </location>
</feature>
<sequence length="108" mass="12330">MLLFCPGCGNGLIVEEGQRCHRFACNTCPYVHNITRKVTNRKYPKLKEVDDVLGGAAAWENVDSTAEPCPKCEHPRAYFMQLQTRSADEPMTTFYKCCNAQCGHRWRD</sequence>
<proteinExistence type="inferred from homology"/>
<reference key="1">
    <citation type="journal article" date="2005" name="Science">
        <title>The transcriptional landscape of the mammalian genome.</title>
        <authorList>
            <person name="Carninci P."/>
            <person name="Kasukawa T."/>
            <person name="Katayama S."/>
            <person name="Gough J."/>
            <person name="Frith M.C."/>
            <person name="Maeda N."/>
            <person name="Oyama R."/>
            <person name="Ravasi T."/>
            <person name="Lenhard B."/>
            <person name="Wells C."/>
            <person name="Kodzius R."/>
            <person name="Shimokawa K."/>
            <person name="Bajic V.B."/>
            <person name="Brenner S.E."/>
            <person name="Batalov S."/>
            <person name="Forrest A.R."/>
            <person name="Zavolan M."/>
            <person name="Davis M.J."/>
            <person name="Wilming L.G."/>
            <person name="Aidinis V."/>
            <person name="Allen J.E."/>
            <person name="Ambesi-Impiombato A."/>
            <person name="Apweiler R."/>
            <person name="Aturaliya R.N."/>
            <person name="Bailey T.L."/>
            <person name="Bansal M."/>
            <person name="Baxter L."/>
            <person name="Beisel K.W."/>
            <person name="Bersano T."/>
            <person name="Bono H."/>
            <person name="Chalk A.M."/>
            <person name="Chiu K.P."/>
            <person name="Choudhary V."/>
            <person name="Christoffels A."/>
            <person name="Clutterbuck D.R."/>
            <person name="Crowe M.L."/>
            <person name="Dalla E."/>
            <person name="Dalrymple B.P."/>
            <person name="de Bono B."/>
            <person name="Della Gatta G."/>
            <person name="di Bernardo D."/>
            <person name="Down T."/>
            <person name="Engstrom P."/>
            <person name="Fagiolini M."/>
            <person name="Faulkner G."/>
            <person name="Fletcher C.F."/>
            <person name="Fukushima T."/>
            <person name="Furuno M."/>
            <person name="Futaki S."/>
            <person name="Gariboldi M."/>
            <person name="Georgii-Hemming P."/>
            <person name="Gingeras T.R."/>
            <person name="Gojobori T."/>
            <person name="Green R.E."/>
            <person name="Gustincich S."/>
            <person name="Harbers M."/>
            <person name="Hayashi Y."/>
            <person name="Hensch T.K."/>
            <person name="Hirokawa N."/>
            <person name="Hill D."/>
            <person name="Huminiecki L."/>
            <person name="Iacono M."/>
            <person name="Ikeo K."/>
            <person name="Iwama A."/>
            <person name="Ishikawa T."/>
            <person name="Jakt M."/>
            <person name="Kanapin A."/>
            <person name="Katoh M."/>
            <person name="Kawasawa Y."/>
            <person name="Kelso J."/>
            <person name="Kitamura H."/>
            <person name="Kitano H."/>
            <person name="Kollias G."/>
            <person name="Krishnan S.P."/>
            <person name="Kruger A."/>
            <person name="Kummerfeld S.K."/>
            <person name="Kurochkin I.V."/>
            <person name="Lareau L.F."/>
            <person name="Lazarevic D."/>
            <person name="Lipovich L."/>
            <person name="Liu J."/>
            <person name="Liuni S."/>
            <person name="McWilliam S."/>
            <person name="Madan Babu M."/>
            <person name="Madera M."/>
            <person name="Marchionni L."/>
            <person name="Matsuda H."/>
            <person name="Matsuzawa S."/>
            <person name="Miki H."/>
            <person name="Mignone F."/>
            <person name="Miyake S."/>
            <person name="Morris K."/>
            <person name="Mottagui-Tabar S."/>
            <person name="Mulder N."/>
            <person name="Nakano N."/>
            <person name="Nakauchi H."/>
            <person name="Ng P."/>
            <person name="Nilsson R."/>
            <person name="Nishiguchi S."/>
            <person name="Nishikawa S."/>
            <person name="Nori F."/>
            <person name="Ohara O."/>
            <person name="Okazaki Y."/>
            <person name="Orlando V."/>
            <person name="Pang K.C."/>
            <person name="Pavan W.J."/>
            <person name="Pavesi G."/>
            <person name="Pesole G."/>
            <person name="Petrovsky N."/>
            <person name="Piazza S."/>
            <person name="Reed J."/>
            <person name="Reid J.F."/>
            <person name="Ring B.Z."/>
            <person name="Ringwald M."/>
            <person name="Rost B."/>
            <person name="Ruan Y."/>
            <person name="Salzberg S.L."/>
            <person name="Sandelin A."/>
            <person name="Schneider C."/>
            <person name="Schoenbach C."/>
            <person name="Sekiguchi K."/>
            <person name="Semple C.A."/>
            <person name="Seno S."/>
            <person name="Sessa L."/>
            <person name="Sheng Y."/>
            <person name="Shibata Y."/>
            <person name="Shimada H."/>
            <person name="Shimada K."/>
            <person name="Silva D."/>
            <person name="Sinclair B."/>
            <person name="Sperling S."/>
            <person name="Stupka E."/>
            <person name="Sugiura K."/>
            <person name="Sultana R."/>
            <person name="Takenaka Y."/>
            <person name="Taki K."/>
            <person name="Tammoja K."/>
            <person name="Tan S.L."/>
            <person name="Tang S."/>
            <person name="Taylor M.S."/>
            <person name="Tegner J."/>
            <person name="Teichmann S.A."/>
            <person name="Ueda H.R."/>
            <person name="van Nimwegen E."/>
            <person name="Verardo R."/>
            <person name="Wei C.L."/>
            <person name="Yagi K."/>
            <person name="Yamanishi H."/>
            <person name="Zabarovsky E."/>
            <person name="Zhu S."/>
            <person name="Zimmer A."/>
            <person name="Hide W."/>
            <person name="Bult C."/>
            <person name="Grimmond S.M."/>
            <person name="Teasdale R.D."/>
            <person name="Liu E.T."/>
            <person name="Brusic V."/>
            <person name="Quackenbush J."/>
            <person name="Wahlestedt C."/>
            <person name="Mattick J.S."/>
            <person name="Hume D.A."/>
            <person name="Kai C."/>
            <person name="Sasaki D."/>
            <person name="Tomaru Y."/>
            <person name="Fukuda S."/>
            <person name="Kanamori-Katayama M."/>
            <person name="Suzuki M."/>
            <person name="Aoki J."/>
            <person name="Arakawa T."/>
            <person name="Iida J."/>
            <person name="Imamura K."/>
            <person name="Itoh M."/>
            <person name="Kato T."/>
            <person name="Kawaji H."/>
            <person name="Kawagashira N."/>
            <person name="Kawashima T."/>
            <person name="Kojima M."/>
            <person name="Kondo S."/>
            <person name="Konno H."/>
            <person name="Nakano K."/>
            <person name="Ninomiya N."/>
            <person name="Nishio T."/>
            <person name="Okada M."/>
            <person name="Plessy C."/>
            <person name="Shibata K."/>
            <person name="Shiraki T."/>
            <person name="Suzuki S."/>
            <person name="Tagami M."/>
            <person name="Waki K."/>
            <person name="Watahiki A."/>
            <person name="Okamura-Oho Y."/>
            <person name="Suzuki H."/>
            <person name="Kawai J."/>
            <person name="Hayashizaki Y."/>
        </authorList>
    </citation>
    <scope>NUCLEOTIDE SEQUENCE [LARGE SCALE MRNA]</scope>
    <source>
        <strain>C57BL/6J</strain>
        <tissue>Cerebellum</tissue>
        <tissue>Embryonic liver</tissue>
        <tissue>Forelimb</tissue>
        <tissue>Mammary gland</tissue>
    </source>
</reference>